<dbReference type="EMBL" id="AY988044">
    <property type="protein sequence ID" value="AAY44251.1"/>
    <property type="molecule type" value="Genomic_DNA"/>
</dbReference>
<dbReference type="SMR" id="Q1X6Z4"/>
<dbReference type="GlyCosmos" id="Q1X6Z4">
    <property type="glycosylation" value="1 site, No reported glycans"/>
</dbReference>
<dbReference type="GO" id="GO:0030424">
    <property type="term" value="C:axon"/>
    <property type="evidence" value="ECO:0007669"/>
    <property type="project" value="TreeGrafter"/>
</dbReference>
<dbReference type="GO" id="GO:0030425">
    <property type="term" value="C:dendrite"/>
    <property type="evidence" value="ECO:0007669"/>
    <property type="project" value="TreeGrafter"/>
</dbReference>
<dbReference type="GO" id="GO:0005615">
    <property type="term" value="C:extracellular space"/>
    <property type="evidence" value="ECO:0007669"/>
    <property type="project" value="TreeGrafter"/>
</dbReference>
<dbReference type="GO" id="GO:0008021">
    <property type="term" value="C:synaptic vesicle"/>
    <property type="evidence" value="ECO:0007669"/>
    <property type="project" value="TreeGrafter"/>
</dbReference>
<dbReference type="GO" id="GO:0008083">
    <property type="term" value="F:growth factor activity"/>
    <property type="evidence" value="ECO:0007669"/>
    <property type="project" value="UniProtKB-KW"/>
</dbReference>
<dbReference type="GO" id="GO:0005163">
    <property type="term" value="F:nerve growth factor receptor binding"/>
    <property type="evidence" value="ECO:0007669"/>
    <property type="project" value="TreeGrafter"/>
</dbReference>
<dbReference type="GO" id="GO:0007169">
    <property type="term" value="P:cell surface receptor protein tyrosine kinase signaling pathway"/>
    <property type="evidence" value="ECO:0007669"/>
    <property type="project" value="TreeGrafter"/>
</dbReference>
<dbReference type="GO" id="GO:0050804">
    <property type="term" value="P:modulation of chemical synaptic transmission"/>
    <property type="evidence" value="ECO:0007669"/>
    <property type="project" value="TreeGrafter"/>
</dbReference>
<dbReference type="GO" id="GO:0043524">
    <property type="term" value="P:negative regulation of neuron apoptotic process"/>
    <property type="evidence" value="ECO:0007669"/>
    <property type="project" value="TreeGrafter"/>
</dbReference>
<dbReference type="GO" id="GO:0021675">
    <property type="term" value="P:nerve development"/>
    <property type="evidence" value="ECO:0007669"/>
    <property type="project" value="TreeGrafter"/>
</dbReference>
<dbReference type="GO" id="GO:0038180">
    <property type="term" value="P:nerve growth factor signaling pathway"/>
    <property type="evidence" value="ECO:0007669"/>
    <property type="project" value="TreeGrafter"/>
</dbReference>
<dbReference type="GO" id="GO:0048812">
    <property type="term" value="P:neuron projection morphogenesis"/>
    <property type="evidence" value="ECO:0007669"/>
    <property type="project" value="TreeGrafter"/>
</dbReference>
<dbReference type="Gene3D" id="2.10.90.10">
    <property type="entry name" value="Cystine-knot cytokines"/>
    <property type="match status" value="1"/>
</dbReference>
<dbReference type="InterPro" id="IPR029034">
    <property type="entry name" value="Cystine-knot_cytokine"/>
</dbReference>
<dbReference type="InterPro" id="IPR020408">
    <property type="entry name" value="Nerve_growth_factor-like"/>
</dbReference>
<dbReference type="InterPro" id="IPR002072">
    <property type="entry name" value="Nerve_growth_factor-rel"/>
</dbReference>
<dbReference type="InterPro" id="IPR015578">
    <property type="entry name" value="Neurotrophin-3"/>
</dbReference>
<dbReference type="InterPro" id="IPR045815">
    <property type="entry name" value="NTF3_N"/>
</dbReference>
<dbReference type="PANTHER" id="PTHR11589">
    <property type="entry name" value="NERVE GROWTH FACTOR NGF -RELATED"/>
    <property type="match status" value="1"/>
</dbReference>
<dbReference type="PANTHER" id="PTHR11589:SF4">
    <property type="entry name" value="NEUROTROPHIN-3"/>
    <property type="match status" value="1"/>
</dbReference>
<dbReference type="Pfam" id="PF00243">
    <property type="entry name" value="NGF"/>
    <property type="match status" value="1"/>
</dbReference>
<dbReference type="Pfam" id="PF19338">
    <property type="entry name" value="NTF3_N"/>
    <property type="match status" value="1"/>
</dbReference>
<dbReference type="PIRSF" id="PIRSF001789">
    <property type="entry name" value="NGF"/>
    <property type="match status" value="1"/>
</dbReference>
<dbReference type="PRINTS" id="PR01914">
    <property type="entry name" value="NEUROTROPHN3"/>
</dbReference>
<dbReference type="SMART" id="SM00140">
    <property type="entry name" value="NGF"/>
    <property type="match status" value="1"/>
</dbReference>
<dbReference type="SUPFAM" id="SSF57501">
    <property type="entry name" value="Cystine-knot cytokines"/>
    <property type="match status" value="1"/>
</dbReference>
<dbReference type="PROSITE" id="PS50270">
    <property type="entry name" value="NGF_2"/>
    <property type="match status" value="1"/>
</dbReference>
<protein>
    <recommendedName>
        <fullName>Neurotrophin-3</fullName>
        <shortName>NT-3</shortName>
    </recommendedName>
</protein>
<comment type="function">
    <text evidence="1">Seems to promote the survival of visceral and proprioceptive sensory neurons.</text>
</comment>
<comment type="subcellular location">
    <subcellularLocation>
        <location evidence="1">Secreted</location>
    </subcellularLocation>
</comment>
<comment type="similarity">
    <text evidence="4">Belongs to the NGF-beta family.</text>
</comment>
<organism>
    <name type="scientific">Corallus caninus</name>
    <name type="common">Emerald tree boa</name>
    <dbReference type="NCBI Taxonomy" id="51861"/>
    <lineage>
        <taxon>Eukaryota</taxon>
        <taxon>Metazoa</taxon>
        <taxon>Chordata</taxon>
        <taxon>Craniata</taxon>
        <taxon>Vertebrata</taxon>
        <taxon>Euteleostomi</taxon>
        <taxon>Lepidosauria</taxon>
        <taxon>Squamata</taxon>
        <taxon>Bifurcata</taxon>
        <taxon>Unidentata</taxon>
        <taxon>Episquamata</taxon>
        <taxon>Toxicofera</taxon>
        <taxon>Serpentes</taxon>
        <taxon>Henophidia</taxon>
        <taxon>Boidae</taxon>
        <taxon>Boinae</taxon>
        <taxon>Corallus</taxon>
    </lineage>
</organism>
<evidence type="ECO:0000250" key="1"/>
<evidence type="ECO:0000255" key="2"/>
<evidence type="ECO:0000256" key="3">
    <source>
        <dbReference type="SAM" id="MobiDB-lite"/>
    </source>
</evidence>
<evidence type="ECO:0000305" key="4"/>
<proteinExistence type="inferred from homology"/>
<feature type="signal peptide" evidence="2">
    <location>
        <begin position="1" status="less than"/>
        <end position="3"/>
    </location>
</feature>
<feature type="propeptide" id="PRO_0000346721" evidence="1">
    <location>
        <begin position="4"/>
        <end position="119"/>
    </location>
</feature>
<feature type="chain" id="PRO_0000346722" description="Neurotrophin-3">
    <location>
        <begin position="120"/>
        <end position="163" status="greater than"/>
    </location>
</feature>
<feature type="region of interest" description="Disordered" evidence="3">
    <location>
        <begin position="35"/>
        <end position="61"/>
    </location>
</feature>
<feature type="glycosylation site" description="N-linked (GlcNAc...) asparagine" evidence="2">
    <location>
        <position position="112"/>
    </location>
</feature>
<feature type="non-terminal residue">
    <location>
        <position position="1"/>
    </location>
</feature>
<feature type="non-terminal residue">
    <location>
        <position position="163"/>
    </location>
</feature>
<name>NTF3_CORCI</name>
<gene>
    <name type="primary">NTF3</name>
</gene>
<keyword id="KW-0165">Cleavage on pair of basic residues</keyword>
<keyword id="KW-0325">Glycoprotein</keyword>
<keyword id="KW-0339">Growth factor</keyword>
<keyword id="KW-0964">Secreted</keyword>
<keyword id="KW-0732">Signal</keyword>
<sequence>IQSTSMDQGILTEDSMNSFIRTLIQAGIWKNKVPKQTARTKDGTQTTVKKSEAEADATASQDTRLGFQPVVSVDAELLRQQRRFSSPRVLLSENTPLEPPPLYLTEEPVVLNRTSRRKREGKSHRGEYSVCDSESRWVTDKSSAVDIRGHQVTVLGEIRMGPS</sequence>
<reference key="1">
    <citation type="journal article" date="2006" name="Mol. Phylogenet. Evol.">
        <title>Dispersal and vicariance: the complex evolutionary history of boid snakes.</title>
        <authorList>
            <person name="Noonan B.P."/>
            <person name="Chippindale P.T."/>
        </authorList>
    </citation>
    <scope>NUCLEOTIDE SEQUENCE [GENOMIC DNA]</scope>
</reference>
<accession>Q1X6Z4</accession>